<name>ATXA_LEIDO</name>
<comment type="catalytic activity">
    <reaction>
        <text>ATP + H2O + H(+)(in) = ADP + phosphate + 2 H(+)(out)</text>
        <dbReference type="Rhea" id="RHEA:20852"/>
        <dbReference type="ChEBI" id="CHEBI:15377"/>
        <dbReference type="ChEBI" id="CHEBI:15378"/>
        <dbReference type="ChEBI" id="CHEBI:30616"/>
        <dbReference type="ChEBI" id="CHEBI:43474"/>
        <dbReference type="ChEBI" id="CHEBI:456216"/>
        <dbReference type="EC" id="7.1.2.1"/>
    </reaction>
</comment>
<comment type="subcellular location">
    <subcellularLocation>
        <location>Membrane</location>
        <topology>Multi-pass membrane protein</topology>
    </subcellularLocation>
</comment>
<comment type="developmental stage">
    <text evidence="4">More abundant in promastigotes than amastigotes.</text>
</comment>
<comment type="similarity">
    <text evidence="5">Belongs to the cation transport ATPase (P-type) (TC 3.A.3) family. Type IIIA subfamily.</text>
</comment>
<sequence length="974" mass="107479">MSSKKYELDAAAFEDKPESHSDAEMTPQKPQRRQSVLSKAVSEHDERATGPATDLLPPSKGLTTEEAEELLKKYGRNELPEKKTPSWLIYVRGLWGPMPAALWIAIIIEFALENWPDGAILFAIQIANATIGWYETIKAGDAVAALKNSLKPTATVYRDSKWQQIDAAVLVPGDLVKLASGSAVPADCSINEGVIDVDEAALTGESLPVTMGPEHMPKMGSNVVRGEVEGTVQYTGSLTFFGKTAALLQSVESDLGNIHVILRRVMFSLCAISFMLCMCCFIYLLARFYETFRHALQFAVVVLVVSIPIALEIVVTTTLAVGSKHLSKHKIIVTKLSAIEMMSGVNMLCSDKTGTLTLNKMEIQEQCFTFEEGNDLKSTLVLAALAAKWREPPRDALDTMVLGAADLDECDNYQQLNFVPFDPTTKRTAATLVDRRSGEKFDVTKGAPHVILQMVYNQDEINDEVVDIIDSLAARGVRCLSVAKTDQQGRWHMAGILTFLDPPRPDTKDTIRRSKEYGVDVKMITGDHLLIAKEMCRMLDLDPNILTADKLPQIKDANDLPEDLGEKYGDMMLSVGGFAQVFPEHKFMIVETLRQRGYTCAMTGDGVNDAPALKRADVGIAVHGATDAARAAADMVLTEPGLSVVVEAMLVSREVFQRMLSFLTYRISATLQLVCFFFIACFSLTPKAYGSVDPHFQFFHLPVLMFMLITLLNDGCLMTIGYDHVIPSERPQKWNLPVVFVSASILAAVACGSSLMLLWIGLEGYSSQYYENSWFHRLGLAQLPQGKLVTMMYLKISISDFLTLFSSRTGGHFFFYMPPSPILFCGAIISLLVSTMAASFWHKSRPDNVLTEGLAWGQTNAEKLLPLWVWIYCIVWWFVQDVVKVLAHICMDAVDLFGCVSDASGSGPIKPYSDDMKVNGFEPVKKPAEKSTEKALNSSVSSASHKALEGLREDTHSPIEEASPVNVYVSRDQK</sequence>
<keyword id="KW-0067">ATP-binding</keyword>
<keyword id="KW-0375">Hydrogen ion transport</keyword>
<keyword id="KW-0406">Ion transport</keyword>
<keyword id="KW-0460">Magnesium</keyword>
<keyword id="KW-0472">Membrane</keyword>
<keyword id="KW-0479">Metal-binding</keyword>
<keyword id="KW-0547">Nucleotide-binding</keyword>
<keyword id="KW-0597">Phosphoprotein</keyword>
<keyword id="KW-1278">Translocase</keyword>
<keyword id="KW-0812">Transmembrane</keyword>
<keyword id="KW-1133">Transmembrane helix</keyword>
<keyword id="KW-0813">Transport</keyword>
<accession>P11718</accession>
<organism>
    <name type="scientific">Leishmania donovani</name>
    <dbReference type="NCBI Taxonomy" id="5661"/>
    <lineage>
        <taxon>Eukaryota</taxon>
        <taxon>Discoba</taxon>
        <taxon>Euglenozoa</taxon>
        <taxon>Kinetoplastea</taxon>
        <taxon>Metakinetoplastina</taxon>
        <taxon>Trypanosomatida</taxon>
        <taxon>Trypanosomatidae</taxon>
        <taxon>Leishmaniinae</taxon>
        <taxon>Leishmania</taxon>
    </lineage>
</organism>
<dbReference type="EC" id="7.1.2.1"/>
<dbReference type="EMBL" id="AF109296">
    <property type="protein sequence ID" value="AAA29227.2"/>
    <property type="molecule type" value="Genomic_DNA"/>
</dbReference>
<dbReference type="PIR" id="A27124">
    <property type="entry name" value="PXLNPD"/>
</dbReference>
<dbReference type="SMR" id="P11718"/>
<dbReference type="TCDB" id="3.A.3.3.2">
    <property type="family name" value="the p-type atpase (p-atpase) superfamily"/>
</dbReference>
<dbReference type="VEuPathDB" id="TriTrypDB:LdBPK_181510.1"/>
<dbReference type="VEuPathDB" id="TriTrypDB:LdCL_180020300"/>
<dbReference type="VEuPathDB" id="TriTrypDB:LDHU3_18.1890"/>
<dbReference type="GO" id="GO:0016020">
    <property type="term" value="C:membrane"/>
    <property type="evidence" value="ECO:0007669"/>
    <property type="project" value="UniProtKB-SubCell"/>
</dbReference>
<dbReference type="GO" id="GO:0005524">
    <property type="term" value="F:ATP binding"/>
    <property type="evidence" value="ECO:0007669"/>
    <property type="project" value="UniProtKB-KW"/>
</dbReference>
<dbReference type="GO" id="GO:0016887">
    <property type="term" value="F:ATP hydrolysis activity"/>
    <property type="evidence" value="ECO:0007669"/>
    <property type="project" value="InterPro"/>
</dbReference>
<dbReference type="GO" id="GO:0046872">
    <property type="term" value="F:metal ion binding"/>
    <property type="evidence" value="ECO:0007669"/>
    <property type="project" value="UniProtKB-KW"/>
</dbReference>
<dbReference type="GO" id="GO:0008553">
    <property type="term" value="F:P-type proton-exporting transporter activity"/>
    <property type="evidence" value="ECO:0007669"/>
    <property type="project" value="UniProtKB-EC"/>
</dbReference>
<dbReference type="GO" id="GO:0120029">
    <property type="term" value="P:proton export across plasma membrane"/>
    <property type="evidence" value="ECO:0007669"/>
    <property type="project" value="InterPro"/>
</dbReference>
<dbReference type="CDD" id="cd02076">
    <property type="entry name" value="P-type_ATPase_H"/>
    <property type="match status" value="1"/>
</dbReference>
<dbReference type="FunFam" id="2.70.150.10:FF:000042">
    <property type="entry name" value="Plasma membrane ATPase"/>
    <property type="match status" value="1"/>
</dbReference>
<dbReference type="FunFam" id="3.40.1110.10:FF:000005">
    <property type="entry name" value="Plasma membrane ATPase"/>
    <property type="match status" value="1"/>
</dbReference>
<dbReference type="FunFam" id="3.40.50.1000:FF:000008">
    <property type="entry name" value="Plasma membrane ATPase"/>
    <property type="match status" value="1"/>
</dbReference>
<dbReference type="Gene3D" id="3.40.1110.10">
    <property type="entry name" value="Calcium-transporting ATPase, cytoplasmic domain N"/>
    <property type="match status" value="1"/>
</dbReference>
<dbReference type="Gene3D" id="2.70.150.10">
    <property type="entry name" value="Calcium-transporting ATPase, cytoplasmic transduction domain A"/>
    <property type="match status" value="1"/>
</dbReference>
<dbReference type="Gene3D" id="1.20.1110.10">
    <property type="entry name" value="Calcium-transporting ATPase, transmembrane domain"/>
    <property type="match status" value="1"/>
</dbReference>
<dbReference type="Gene3D" id="3.40.50.1000">
    <property type="entry name" value="HAD superfamily/HAD-like"/>
    <property type="match status" value="1"/>
</dbReference>
<dbReference type="InterPro" id="IPR004014">
    <property type="entry name" value="ATPase_P-typ_cation-transptr_N"/>
</dbReference>
<dbReference type="InterPro" id="IPR023299">
    <property type="entry name" value="ATPase_P-typ_cyto_dom_N"/>
</dbReference>
<dbReference type="InterPro" id="IPR018303">
    <property type="entry name" value="ATPase_P-typ_P_site"/>
</dbReference>
<dbReference type="InterPro" id="IPR023298">
    <property type="entry name" value="ATPase_P-typ_TM_dom_sf"/>
</dbReference>
<dbReference type="InterPro" id="IPR008250">
    <property type="entry name" value="ATPase_P-typ_transduc_dom_A_sf"/>
</dbReference>
<dbReference type="InterPro" id="IPR036412">
    <property type="entry name" value="HAD-like_sf"/>
</dbReference>
<dbReference type="InterPro" id="IPR023214">
    <property type="entry name" value="HAD_sf"/>
</dbReference>
<dbReference type="InterPro" id="IPR006534">
    <property type="entry name" value="P-type_ATPase_IIIA"/>
</dbReference>
<dbReference type="InterPro" id="IPR001757">
    <property type="entry name" value="P_typ_ATPase"/>
</dbReference>
<dbReference type="InterPro" id="IPR044492">
    <property type="entry name" value="P_typ_ATPase_HD_dom"/>
</dbReference>
<dbReference type="NCBIfam" id="TIGR01647">
    <property type="entry name" value="ATPase-IIIA_H"/>
    <property type="match status" value="1"/>
</dbReference>
<dbReference type="NCBIfam" id="TIGR01494">
    <property type="entry name" value="ATPase_P-type"/>
    <property type="match status" value="2"/>
</dbReference>
<dbReference type="PANTHER" id="PTHR42861">
    <property type="entry name" value="CALCIUM-TRANSPORTING ATPASE"/>
    <property type="match status" value="1"/>
</dbReference>
<dbReference type="Pfam" id="PF00690">
    <property type="entry name" value="Cation_ATPase_N"/>
    <property type="match status" value="1"/>
</dbReference>
<dbReference type="Pfam" id="PF00122">
    <property type="entry name" value="E1-E2_ATPase"/>
    <property type="match status" value="1"/>
</dbReference>
<dbReference type="Pfam" id="PF00702">
    <property type="entry name" value="Hydrolase"/>
    <property type="match status" value="1"/>
</dbReference>
<dbReference type="PRINTS" id="PR00119">
    <property type="entry name" value="CATATPASE"/>
</dbReference>
<dbReference type="PRINTS" id="PR00120">
    <property type="entry name" value="HATPASE"/>
</dbReference>
<dbReference type="SFLD" id="SFLDS00003">
    <property type="entry name" value="Haloacid_Dehalogenase"/>
    <property type="match status" value="1"/>
</dbReference>
<dbReference type="SFLD" id="SFLDF00027">
    <property type="entry name" value="p-type_atpase"/>
    <property type="match status" value="1"/>
</dbReference>
<dbReference type="SMART" id="SM00831">
    <property type="entry name" value="Cation_ATPase_N"/>
    <property type="match status" value="1"/>
</dbReference>
<dbReference type="SUPFAM" id="SSF81653">
    <property type="entry name" value="Calcium ATPase, transduction domain A"/>
    <property type="match status" value="1"/>
</dbReference>
<dbReference type="SUPFAM" id="SSF81665">
    <property type="entry name" value="Calcium ATPase, transmembrane domain M"/>
    <property type="match status" value="1"/>
</dbReference>
<dbReference type="SUPFAM" id="SSF56784">
    <property type="entry name" value="HAD-like"/>
    <property type="match status" value="1"/>
</dbReference>
<dbReference type="SUPFAM" id="SSF81660">
    <property type="entry name" value="Metal cation-transporting ATPase, ATP-binding domain N"/>
    <property type="match status" value="1"/>
</dbReference>
<dbReference type="PROSITE" id="PS00154">
    <property type="entry name" value="ATPASE_E1_E2"/>
    <property type="match status" value="1"/>
</dbReference>
<gene>
    <name type="primary">H1A</name>
</gene>
<feature type="chain" id="PRO_0000046180" description="Probable proton ATPase 1A">
    <location>
        <begin position="1"/>
        <end position="974"/>
    </location>
</feature>
<feature type="topological domain" description="Cytoplasmic" evidence="2">
    <location>
        <begin position="1"/>
        <end position="92"/>
    </location>
</feature>
<feature type="transmembrane region" description="Helical; Name=1" evidence="2">
    <location>
        <begin position="93"/>
        <end position="112"/>
    </location>
</feature>
<feature type="topological domain" description="Extracellular" evidence="2">
    <location>
        <begin position="113"/>
        <end position="117"/>
    </location>
</feature>
<feature type="transmembrane region" description="Helical; Name=2" evidence="2">
    <location>
        <begin position="118"/>
        <end position="137"/>
    </location>
</feature>
<feature type="topological domain" description="Cytoplasmic" evidence="2">
    <location>
        <begin position="138"/>
        <end position="264"/>
    </location>
</feature>
<feature type="transmembrane region" description="Helical; Name=3" evidence="2">
    <location>
        <begin position="265"/>
        <end position="286"/>
    </location>
</feature>
<feature type="topological domain" description="Extracellular" evidence="2">
    <location>
        <begin position="287"/>
        <end position="294"/>
    </location>
</feature>
<feature type="transmembrane region" description="Helical; Name=4" evidence="2">
    <location>
        <begin position="295"/>
        <end position="321"/>
    </location>
</feature>
<feature type="topological domain" description="Cytoplasmic" evidence="2">
    <location>
        <begin position="322"/>
        <end position="630"/>
    </location>
</feature>
<feature type="transmembrane region" description="Helical; Name=5" evidence="2">
    <location>
        <begin position="631"/>
        <end position="651"/>
    </location>
</feature>
<feature type="topological domain" description="Extracellular" evidence="2">
    <location>
        <begin position="652"/>
        <end position="661"/>
    </location>
</feature>
<feature type="transmembrane region" description="Helical; Name=6" evidence="2">
    <location>
        <begin position="662"/>
        <end position="684"/>
    </location>
</feature>
<feature type="topological domain" description="Cytoplasmic" evidence="2">
    <location>
        <begin position="685"/>
        <end position="697"/>
    </location>
</feature>
<feature type="transmembrane region" description="Helical; Name=7" evidence="2">
    <location>
        <begin position="698"/>
        <end position="712"/>
    </location>
</feature>
<feature type="topological domain" description="Extracellular" evidence="2">
    <location>
        <begin position="713"/>
        <end position="737"/>
    </location>
</feature>
<feature type="transmembrane region" description="Helical; Name=8" evidence="2">
    <location>
        <begin position="738"/>
        <end position="761"/>
    </location>
</feature>
<feature type="topological domain" description="Cytoplasmic" evidence="2">
    <location>
        <begin position="762"/>
        <end position="812"/>
    </location>
</feature>
<feature type="transmembrane region" description="Helical; Name=9" evidence="2">
    <location>
        <begin position="813"/>
        <end position="840"/>
    </location>
</feature>
<feature type="topological domain" description="Extracellular" evidence="2">
    <location>
        <begin position="841"/>
        <end position="868"/>
    </location>
</feature>
<feature type="transmembrane region" description="Helical; Name=10" evidence="2">
    <location>
        <begin position="869"/>
        <end position="887"/>
    </location>
</feature>
<feature type="topological domain" description="Cytoplasmic" evidence="2">
    <location>
        <begin position="888"/>
        <end position="974"/>
    </location>
</feature>
<feature type="region of interest" description="Disordered" evidence="3">
    <location>
        <begin position="1"/>
        <end position="61"/>
    </location>
</feature>
<feature type="region of interest" description="Disordered" evidence="3">
    <location>
        <begin position="950"/>
        <end position="974"/>
    </location>
</feature>
<feature type="compositionally biased region" description="Basic and acidic residues" evidence="3">
    <location>
        <begin position="1"/>
        <end position="23"/>
    </location>
</feature>
<feature type="compositionally biased region" description="Basic and acidic residues" evidence="3">
    <location>
        <begin position="950"/>
        <end position="959"/>
    </location>
</feature>
<feature type="active site" description="4-aspartylphosphate intermediate" evidence="1">
    <location>
        <position position="351"/>
    </location>
</feature>
<feature type="binding site" evidence="1">
    <location>
        <position position="605"/>
    </location>
    <ligand>
        <name>Mg(2+)</name>
        <dbReference type="ChEBI" id="CHEBI:18420"/>
    </ligand>
</feature>
<feature type="binding site" evidence="1">
    <location>
        <position position="609"/>
    </location>
    <ligand>
        <name>Mg(2+)</name>
        <dbReference type="ChEBI" id="CHEBI:18420"/>
    </ligand>
</feature>
<feature type="binding site" evidence="2">
    <location>
        <position position="714"/>
    </location>
    <ligand>
        <name>Mg(2+)</name>
        <dbReference type="ChEBI" id="CHEBI:18420"/>
    </ligand>
</feature>
<proteinExistence type="evidence at transcript level"/>
<reference key="1">
    <citation type="journal article" date="1987" name="Mol. Cell. Biol.">
        <title>Structure and expression of a tandem gene pair in Leishmania donovani that encodes a protein structurally homologous to eucaryotic cation-transporting ATPases.</title>
        <authorList>
            <person name="Meade J.C."/>
            <person name="Shaw J."/>
            <person name="Lemaster S."/>
            <person name="Gallagher G."/>
            <person name="Stringer J.R."/>
        </authorList>
    </citation>
    <scope>NUCLEOTIDE SEQUENCE [GENOMIC DNA]</scope>
</reference>
<reference key="2">
    <citation type="journal article" date="1989" name="Mol. Biochem. Parasitol.">
        <title>A tandem pair of Leishmania donovani cation transporting ATPase genes encode isoforms that are differentially expressed.</title>
        <authorList>
            <person name="Meade J.C."/>
            <person name="Hudson K.M."/>
            <person name="Stringer S.L."/>
            <person name="Stringer J.R."/>
        </authorList>
    </citation>
    <scope>SEQUENCE REVISION TO 55-56</scope>
    <scope>DEVELOPMENTAL STAGE</scope>
    <source>
        <strain>MHOM/ET/67/L82</strain>
    </source>
</reference>
<protein>
    <recommendedName>
        <fullName>Probable proton ATPase 1A</fullName>
        <ecNumber>7.1.2.1</ecNumber>
    </recommendedName>
    <alternativeName>
        <fullName>LdH1A</fullName>
    </alternativeName>
</protein>
<evidence type="ECO:0000250" key="1"/>
<evidence type="ECO:0000255" key="2"/>
<evidence type="ECO:0000256" key="3">
    <source>
        <dbReference type="SAM" id="MobiDB-lite"/>
    </source>
</evidence>
<evidence type="ECO:0000269" key="4">
    <source>
    </source>
</evidence>
<evidence type="ECO:0000305" key="5"/>